<name>RUTD_METC4</name>
<keyword id="KW-0378">Hydrolase</keyword>
<feature type="chain" id="PRO_0000402970" description="Putative carbamate hydrolase RutD">
    <location>
        <begin position="1"/>
        <end position="260"/>
    </location>
</feature>
<feature type="domain" description="AB hydrolase-1" evidence="1">
    <location>
        <begin position="17"/>
        <end position="240"/>
    </location>
</feature>
<accession>B7KWT4</accession>
<evidence type="ECO:0000255" key="1">
    <source>
        <dbReference type="HAMAP-Rule" id="MF_00832"/>
    </source>
</evidence>
<gene>
    <name evidence="1" type="primary">rutD</name>
    <name type="ordered locus">Mchl_2054</name>
</gene>
<sequence length="260" mass="27439">MAAPVHHEVHGPAGGRTVLLSPGLGGSAHYFAPQVPVLAERFRVVTYDHRGTGRSPSPLEPGHDIAAMARDVLALLDHLGIGTADIVGHALGGLIALQLALTHPERVGRIVVINGWAAMDPATRRCFAARKALLRHAGPEAFVRAQAIFLYPAPWLSENAARVAADEAQALAHFPGTRTALARITALETFDATAALGRIPHETLLMAARDDVLVPFTASDVLAAGLPNARLDLAPEGGHAHSVTRPEAFNRTLLDFLASP</sequence>
<reference key="1">
    <citation type="submission" date="2008-12" db="EMBL/GenBank/DDBJ databases">
        <title>Complete sequence of chromosome of Methylobacterium chloromethanicum CM4.</title>
        <authorList>
            <consortium name="US DOE Joint Genome Institute"/>
            <person name="Lucas S."/>
            <person name="Copeland A."/>
            <person name="Lapidus A."/>
            <person name="Glavina del Rio T."/>
            <person name="Dalin E."/>
            <person name="Tice H."/>
            <person name="Bruce D."/>
            <person name="Goodwin L."/>
            <person name="Pitluck S."/>
            <person name="Chertkov O."/>
            <person name="Brettin T."/>
            <person name="Detter J.C."/>
            <person name="Han C."/>
            <person name="Larimer F."/>
            <person name="Land M."/>
            <person name="Hauser L."/>
            <person name="Kyrpides N."/>
            <person name="Mikhailova N."/>
            <person name="Marx C."/>
            <person name="Richardson P."/>
        </authorList>
    </citation>
    <scope>NUCLEOTIDE SEQUENCE [LARGE SCALE GENOMIC DNA]</scope>
    <source>
        <strain>CM4 / NCIMB 13688</strain>
    </source>
</reference>
<organism>
    <name type="scientific">Methylorubrum extorquens (strain CM4 / NCIMB 13688)</name>
    <name type="common">Methylobacterium extorquens</name>
    <dbReference type="NCBI Taxonomy" id="440085"/>
    <lineage>
        <taxon>Bacteria</taxon>
        <taxon>Pseudomonadati</taxon>
        <taxon>Pseudomonadota</taxon>
        <taxon>Alphaproteobacteria</taxon>
        <taxon>Hyphomicrobiales</taxon>
        <taxon>Methylobacteriaceae</taxon>
        <taxon>Methylorubrum</taxon>
    </lineage>
</organism>
<proteinExistence type="inferred from homology"/>
<dbReference type="EC" id="3.5.1.-" evidence="1"/>
<dbReference type="EMBL" id="CP001298">
    <property type="protein sequence ID" value="ACK82901.1"/>
    <property type="molecule type" value="Genomic_DNA"/>
</dbReference>
<dbReference type="RefSeq" id="WP_015950622.1">
    <property type="nucleotide sequence ID" value="NC_011757.1"/>
</dbReference>
<dbReference type="SMR" id="B7KWT4"/>
<dbReference type="ESTHER" id="metc4-rutd">
    <property type="family name" value="RutD"/>
</dbReference>
<dbReference type="KEGG" id="mch:Mchl_2054"/>
<dbReference type="HOGENOM" id="CLU_020336_50_1_5"/>
<dbReference type="Proteomes" id="UP000002385">
    <property type="component" value="Chromosome"/>
</dbReference>
<dbReference type="GO" id="GO:0016020">
    <property type="term" value="C:membrane"/>
    <property type="evidence" value="ECO:0007669"/>
    <property type="project" value="TreeGrafter"/>
</dbReference>
<dbReference type="GO" id="GO:0016811">
    <property type="term" value="F:hydrolase activity, acting on carbon-nitrogen (but not peptide) bonds, in linear amides"/>
    <property type="evidence" value="ECO:0007669"/>
    <property type="project" value="InterPro"/>
</dbReference>
<dbReference type="GO" id="GO:0019740">
    <property type="term" value="P:nitrogen utilization"/>
    <property type="evidence" value="ECO:0007669"/>
    <property type="project" value="UniProtKB-UniRule"/>
</dbReference>
<dbReference type="GO" id="GO:0006212">
    <property type="term" value="P:uracil catabolic process"/>
    <property type="evidence" value="ECO:0007669"/>
    <property type="project" value="UniProtKB-UniRule"/>
</dbReference>
<dbReference type="Gene3D" id="3.40.50.1820">
    <property type="entry name" value="alpha/beta hydrolase"/>
    <property type="match status" value="1"/>
</dbReference>
<dbReference type="HAMAP" id="MF_00832">
    <property type="entry name" value="RutD"/>
    <property type="match status" value="1"/>
</dbReference>
<dbReference type="InterPro" id="IPR000073">
    <property type="entry name" value="AB_hydrolase_1"/>
</dbReference>
<dbReference type="InterPro" id="IPR029058">
    <property type="entry name" value="AB_hydrolase_fold"/>
</dbReference>
<dbReference type="InterPro" id="IPR050266">
    <property type="entry name" value="AB_hydrolase_sf"/>
</dbReference>
<dbReference type="InterPro" id="IPR019913">
    <property type="entry name" value="Pyrimidine_utilisation_RutD"/>
</dbReference>
<dbReference type="NCBIfam" id="TIGR03611">
    <property type="entry name" value="RutD"/>
    <property type="match status" value="1"/>
</dbReference>
<dbReference type="PANTHER" id="PTHR43798:SF33">
    <property type="entry name" value="HYDROLASE, PUTATIVE (AFU_ORTHOLOGUE AFUA_2G14860)-RELATED"/>
    <property type="match status" value="1"/>
</dbReference>
<dbReference type="PANTHER" id="PTHR43798">
    <property type="entry name" value="MONOACYLGLYCEROL LIPASE"/>
    <property type="match status" value="1"/>
</dbReference>
<dbReference type="Pfam" id="PF00561">
    <property type="entry name" value="Abhydrolase_1"/>
    <property type="match status" value="1"/>
</dbReference>
<dbReference type="PRINTS" id="PR00111">
    <property type="entry name" value="ABHYDROLASE"/>
</dbReference>
<dbReference type="SUPFAM" id="SSF53474">
    <property type="entry name" value="alpha/beta-Hydrolases"/>
    <property type="match status" value="1"/>
</dbReference>
<protein>
    <recommendedName>
        <fullName evidence="1">Putative carbamate hydrolase RutD</fullName>
        <ecNumber evidence="1">3.5.1.-</ecNumber>
    </recommendedName>
    <alternativeName>
        <fullName evidence="1">Aminohydrolase</fullName>
    </alternativeName>
</protein>
<comment type="function">
    <text evidence="1">Involved in pyrimidine catabolism. May facilitate the hydrolysis of carbamate, a reaction that can also occur spontaneously.</text>
</comment>
<comment type="catalytic activity">
    <reaction evidence="1">
        <text>carbamate + 2 H(+) = NH4(+) + CO2</text>
        <dbReference type="Rhea" id="RHEA:15649"/>
        <dbReference type="ChEBI" id="CHEBI:13941"/>
        <dbReference type="ChEBI" id="CHEBI:15378"/>
        <dbReference type="ChEBI" id="CHEBI:16526"/>
        <dbReference type="ChEBI" id="CHEBI:28938"/>
    </reaction>
</comment>
<comment type="similarity">
    <text evidence="1">Belongs to the AB hydrolase superfamily. Hydrolase RutD family.</text>
</comment>